<accession>Q09416</accession>
<reference key="1">
    <citation type="journal article" date="1998" name="Science">
        <title>Genome sequence of the nematode C. elegans: a platform for investigating biology.</title>
        <authorList>
            <consortium name="The C. elegans sequencing consortium"/>
        </authorList>
    </citation>
    <scope>NUCLEOTIDE SEQUENCE [LARGE SCALE GENOMIC DNA]</scope>
    <source>
        <strain>Bristol N2</strain>
    </source>
</reference>
<name>MSRP7_CAEEL</name>
<organism>
    <name type="scientific">Caenorhabditis elegans</name>
    <dbReference type="NCBI Taxonomy" id="6239"/>
    <lineage>
        <taxon>Eukaryota</taxon>
        <taxon>Metazoa</taxon>
        <taxon>Ecdysozoa</taxon>
        <taxon>Nematoda</taxon>
        <taxon>Chromadorea</taxon>
        <taxon>Rhabditida</taxon>
        <taxon>Rhabditina</taxon>
        <taxon>Rhabditomorpha</taxon>
        <taxon>Rhabditoidea</taxon>
        <taxon>Rhabditidae</taxon>
        <taxon>Peloderinae</taxon>
        <taxon>Caenorhabditis</taxon>
    </lineage>
</organism>
<keyword id="KW-1185">Reference proteome</keyword>
<keyword id="KW-0732">Signal</keyword>
<gene>
    <name evidence="4" type="primary">msrp-7</name>
    <name evidence="4" type="ORF">R06F6.7</name>
</gene>
<evidence type="ECO:0000255" key="1"/>
<evidence type="ECO:0000256" key="2">
    <source>
        <dbReference type="SAM" id="MobiDB-lite"/>
    </source>
</evidence>
<evidence type="ECO:0000305" key="3"/>
<evidence type="ECO:0000312" key="4">
    <source>
        <dbReference type="WormBase" id="R06F6.7"/>
    </source>
</evidence>
<proteinExistence type="inferred from homology"/>
<dbReference type="EMBL" id="Z46794">
    <property type="protein sequence ID" value="CAA86777.1"/>
    <property type="molecule type" value="Genomic_DNA"/>
</dbReference>
<dbReference type="PIR" id="T23978">
    <property type="entry name" value="T23978"/>
</dbReference>
<dbReference type="RefSeq" id="NP_496327.1">
    <property type="nucleotide sequence ID" value="NM_063926.5"/>
</dbReference>
<dbReference type="FunCoup" id="Q09416">
    <property type="interactions" value="173"/>
</dbReference>
<dbReference type="STRING" id="6239.R06F6.7.1"/>
<dbReference type="PaxDb" id="6239-R06F6.7"/>
<dbReference type="EnsemblMetazoa" id="R06F6.7.1">
    <property type="protein sequence ID" value="R06F6.7.1"/>
    <property type="gene ID" value="WBGene00011070"/>
</dbReference>
<dbReference type="GeneID" id="187643"/>
<dbReference type="KEGG" id="cel:CELE_R06F6.7"/>
<dbReference type="UCSC" id="R06F6.7">
    <property type="organism name" value="c. elegans"/>
</dbReference>
<dbReference type="AGR" id="WB:WBGene00011070"/>
<dbReference type="CTD" id="187643"/>
<dbReference type="WormBase" id="R06F6.7">
    <property type="protein sequence ID" value="CE01623"/>
    <property type="gene ID" value="WBGene00011070"/>
    <property type="gene designation" value="msrp-7"/>
</dbReference>
<dbReference type="eggNOG" id="ENOG502RAJ4">
    <property type="taxonomic scope" value="Eukaryota"/>
</dbReference>
<dbReference type="HOGENOM" id="CLU_162887_0_0_1"/>
<dbReference type="InParanoid" id="Q09416"/>
<dbReference type="OMA" id="GPGDNRK"/>
<dbReference type="OrthoDB" id="5871135at2759"/>
<dbReference type="PRO" id="PR:Q09416"/>
<dbReference type="Proteomes" id="UP000001940">
    <property type="component" value="Chromosome II"/>
</dbReference>
<dbReference type="Bgee" id="WBGene00011070">
    <property type="expression patterns" value="Expressed in larva and 2 other cell types or tissues"/>
</dbReference>
<sequence length="120" mass="12890">MRSWIPLLVLFAVLAVFAQAGKSSESDESRRRPSKSSESSDSDSKSSDSDSSSSEESSGDVPSEAPNTDSTPVEILAAAKPDSGILLGPGDNRVKRDGLPSFYDIRKKRGLPSAYDIRRK</sequence>
<feature type="signal peptide" evidence="1">
    <location>
        <begin position="1"/>
        <end position="18"/>
    </location>
</feature>
<feature type="chain" id="PRO_0000014294" description="Uncharacterized protein msrp-7" evidence="3">
    <location>
        <begin position="19"/>
        <end position="120"/>
    </location>
</feature>
<feature type="region of interest" description="Disordered" evidence="2">
    <location>
        <begin position="20"/>
        <end position="99"/>
    </location>
</feature>
<protein>
    <recommendedName>
        <fullName evidence="3">Uncharacterized protein msrp-7</fullName>
    </recommendedName>
</protein>